<gene>
    <name type="primary">FANCE</name>
    <name type="synonym">FACE</name>
</gene>
<sequence length="536" mass="58711">MATPDAGLPGAEGVEPAPWAQLEAPARLLLQALQAGPEGARRGLGVLRALGSRGWEPFDWGRLLEALCREEPVVQGPDGRLELKPLLLRLPRICQRNLMSLLMAVRPSLPESGLLSVLQIAQQDLAPDPDAWLRALGELLRRDLGVGTSMEGASPLSERCQRQLQSLCRGLGLGGRRLKSPQAPDPEEEENRDSQQPGKRRKDSEEEAASPEGKRVPKRLRCWEEEEDHEKERPEHKSLESLADGGSASPIKDQPVMAVKTGEDGSNLDDAKGLAESLELPKAIQDQLPRLQQLLKTLEEGLEGLEDAPPVELQLLHECSPSQMDLLCAQLQLPQLSDLGLLRLCTWLLALSPDLSLSNATVLTRSLFLGRILSLTSSASRLLTTALTSFCAKYTYPVCSALLDPVLQAPGTGPAQTELLCCLVKMESLEPDAQVLMLGQILELPWKEETFLVLQSLLERQVEMTPEKFSVLMEKLCKKGLAATTSMAYAKLMLTVMTKYQANITETQRLGLAMALEPNTTFLRKSLKAALKHLGP</sequence>
<dbReference type="EMBL" id="AF265210">
    <property type="protein sequence ID" value="AAG16743.1"/>
    <property type="molecule type" value="mRNA"/>
</dbReference>
<dbReference type="EMBL" id="DQ020173">
    <property type="protein sequence ID" value="AAY26395.1"/>
    <property type="molecule type" value="Genomic_DNA"/>
</dbReference>
<dbReference type="EMBL" id="AK292522">
    <property type="protein sequence ID" value="BAF85211.1"/>
    <property type="molecule type" value="mRNA"/>
</dbReference>
<dbReference type="EMBL" id="AL022721">
    <property type="status" value="NOT_ANNOTATED_CDS"/>
    <property type="molecule type" value="Genomic_DNA"/>
</dbReference>
<dbReference type="EMBL" id="CH471081">
    <property type="protein sequence ID" value="EAX03830.1"/>
    <property type="molecule type" value="Genomic_DNA"/>
</dbReference>
<dbReference type="EMBL" id="BC046359">
    <property type="protein sequence ID" value="AAH46359.1"/>
    <property type="molecule type" value="mRNA"/>
</dbReference>
<dbReference type="CCDS" id="CCDS4805.1"/>
<dbReference type="RefSeq" id="NP_068741.1">
    <property type="nucleotide sequence ID" value="NM_021922.3"/>
</dbReference>
<dbReference type="PDB" id="2ILR">
    <property type="method" value="X-ray"/>
    <property type="resolution" value="2.00 A"/>
    <property type="chains" value="A=273-536"/>
</dbReference>
<dbReference type="PDB" id="7KZP">
    <property type="method" value="EM"/>
    <property type="resolution" value="3.10 A"/>
    <property type="chains" value="E=1-536"/>
</dbReference>
<dbReference type="PDB" id="7KZQ">
    <property type="method" value="EM"/>
    <property type="resolution" value="4.20 A"/>
    <property type="chains" value="E=1-536"/>
</dbReference>
<dbReference type="PDB" id="7KZR">
    <property type="method" value="EM"/>
    <property type="resolution" value="4.20 A"/>
    <property type="chains" value="E=1-536"/>
</dbReference>
<dbReference type="PDB" id="7KZS">
    <property type="method" value="EM"/>
    <property type="resolution" value="4.20 A"/>
    <property type="chains" value="E=1-536"/>
</dbReference>
<dbReference type="PDB" id="7KZT">
    <property type="method" value="EM"/>
    <property type="resolution" value="4.20 A"/>
    <property type="chains" value="E=1-536"/>
</dbReference>
<dbReference type="PDB" id="7KZV">
    <property type="method" value="EM"/>
    <property type="resolution" value="4.20 A"/>
    <property type="chains" value="E=1-536"/>
</dbReference>
<dbReference type="PDBsum" id="2ILR"/>
<dbReference type="PDBsum" id="7KZP"/>
<dbReference type="PDBsum" id="7KZQ"/>
<dbReference type="PDBsum" id="7KZR"/>
<dbReference type="PDBsum" id="7KZS"/>
<dbReference type="PDBsum" id="7KZT"/>
<dbReference type="PDBsum" id="7KZV"/>
<dbReference type="EMDB" id="EMD-23085"/>
<dbReference type="EMDB" id="EMD-23086"/>
<dbReference type="EMDB" id="EMD-23087"/>
<dbReference type="EMDB" id="EMD-23088"/>
<dbReference type="EMDB" id="EMD-23089"/>
<dbReference type="EMDB" id="EMD-23090"/>
<dbReference type="SMR" id="Q9HB96"/>
<dbReference type="BioGRID" id="108475">
    <property type="interactions" value="37"/>
</dbReference>
<dbReference type="ComplexPortal" id="CPX-6263">
    <property type="entry name" value="Fanconi anemia ubiquitin ligase complex"/>
</dbReference>
<dbReference type="CORUM" id="Q9HB96"/>
<dbReference type="DIP" id="DIP-32845N"/>
<dbReference type="FunCoup" id="Q9HB96">
    <property type="interactions" value="1744"/>
</dbReference>
<dbReference type="IntAct" id="Q9HB96">
    <property type="interactions" value="14"/>
</dbReference>
<dbReference type="MINT" id="Q9HB96"/>
<dbReference type="STRING" id="9606.ENSP00000229769"/>
<dbReference type="iPTMnet" id="Q9HB96"/>
<dbReference type="PhosphoSitePlus" id="Q9HB96"/>
<dbReference type="BioMuta" id="FANCE"/>
<dbReference type="DMDM" id="45476978"/>
<dbReference type="jPOST" id="Q9HB96"/>
<dbReference type="MassIVE" id="Q9HB96"/>
<dbReference type="PaxDb" id="9606-ENSP00000229769"/>
<dbReference type="PeptideAtlas" id="Q9HB96"/>
<dbReference type="ProteomicsDB" id="81510"/>
<dbReference type="Pumba" id="Q9HB96"/>
<dbReference type="TopDownProteomics" id="Q9HB96"/>
<dbReference type="Antibodypedia" id="4446">
    <property type="antibodies" value="201 antibodies from 30 providers"/>
</dbReference>
<dbReference type="DNASU" id="2178"/>
<dbReference type="Ensembl" id="ENST00000229769.3">
    <property type="protein sequence ID" value="ENSP00000229769.2"/>
    <property type="gene ID" value="ENSG00000112039.6"/>
</dbReference>
<dbReference type="GeneID" id="2178"/>
<dbReference type="KEGG" id="hsa:2178"/>
<dbReference type="MANE-Select" id="ENST00000229769.3">
    <property type="protein sequence ID" value="ENSP00000229769.2"/>
    <property type="RefSeq nucleotide sequence ID" value="NM_021922.3"/>
    <property type="RefSeq protein sequence ID" value="NP_068741.1"/>
</dbReference>
<dbReference type="UCSC" id="uc003oko.2">
    <property type="organism name" value="human"/>
</dbReference>
<dbReference type="AGR" id="HGNC:3586"/>
<dbReference type="CTD" id="2178"/>
<dbReference type="DisGeNET" id="2178"/>
<dbReference type="GeneCards" id="FANCE"/>
<dbReference type="GeneReviews" id="FANCE"/>
<dbReference type="HGNC" id="HGNC:3586">
    <property type="gene designation" value="FANCE"/>
</dbReference>
<dbReference type="HPA" id="ENSG00000112039">
    <property type="expression patterns" value="Low tissue specificity"/>
</dbReference>
<dbReference type="MalaCards" id="FANCE"/>
<dbReference type="MIM" id="600901">
    <property type="type" value="phenotype"/>
</dbReference>
<dbReference type="MIM" id="613976">
    <property type="type" value="gene"/>
</dbReference>
<dbReference type="neXtProt" id="NX_Q9HB96"/>
<dbReference type="OpenTargets" id="ENSG00000112039"/>
<dbReference type="Orphanet" id="84">
    <property type="disease" value="Fanconi anemia"/>
</dbReference>
<dbReference type="PharmGKB" id="PA28000"/>
<dbReference type="VEuPathDB" id="HostDB:ENSG00000112039"/>
<dbReference type="eggNOG" id="ENOG502QQV6">
    <property type="taxonomic scope" value="Eukaryota"/>
</dbReference>
<dbReference type="GeneTree" id="ENSGT00390000000705"/>
<dbReference type="HOGENOM" id="CLU_037283_0_0_1"/>
<dbReference type="InParanoid" id="Q9HB96"/>
<dbReference type="OMA" id="LRLPWIC"/>
<dbReference type="OrthoDB" id="2449818at2759"/>
<dbReference type="PAN-GO" id="Q9HB96">
    <property type="GO annotations" value="1 GO annotation based on evolutionary models"/>
</dbReference>
<dbReference type="PhylomeDB" id="Q9HB96"/>
<dbReference type="TreeFam" id="TF330720"/>
<dbReference type="PathwayCommons" id="Q9HB96"/>
<dbReference type="Reactome" id="R-HSA-6783310">
    <property type="pathway name" value="Fanconi Anemia Pathway"/>
</dbReference>
<dbReference type="Reactome" id="R-HSA-9833482">
    <property type="pathway name" value="PKR-mediated signaling"/>
</dbReference>
<dbReference type="SignaLink" id="Q9HB96"/>
<dbReference type="SIGNOR" id="Q9HB96"/>
<dbReference type="BioGRID-ORCS" id="2178">
    <property type="hits" value="58 hits in 1164 CRISPR screens"/>
</dbReference>
<dbReference type="EvolutionaryTrace" id="Q9HB96"/>
<dbReference type="GeneWiki" id="FANCE"/>
<dbReference type="GenomeRNAi" id="2178"/>
<dbReference type="Pharos" id="Q9HB96">
    <property type="development level" value="Tbio"/>
</dbReference>
<dbReference type="PRO" id="PR:Q9HB96"/>
<dbReference type="Proteomes" id="UP000005640">
    <property type="component" value="Chromosome 6"/>
</dbReference>
<dbReference type="RNAct" id="Q9HB96">
    <property type="molecule type" value="protein"/>
</dbReference>
<dbReference type="Bgee" id="ENSG00000112039">
    <property type="expression patterns" value="Expressed in buccal mucosa cell and 122 other cell types or tissues"/>
</dbReference>
<dbReference type="ExpressionAtlas" id="Q9HB96">
    <property type="expression patterns" value="baseline and differential"/>
</dbReference>
<dbReference type="GO" id="GO:0005813">
    <property type="term" value="C:centrosome"/>
    <property type="evidence" value="ECO:0000314"/>
    <property type="project" value="HPA"/>
</dbReference>
<dbReference type="GO" id="GO:0000785">
    <property type="term" value="C:chromatin"/>
    <property type="evidence" value="ECO:0000314"/>
    <property type="project" value="ComplexPortal"/>
</dbReference>
<dbReference type="GO" id="GO:0005694">
    <property type="term" value="C:chromosome"/>
    <property type="evidence" value="ECO:0000314"/>
    <property type="project" value="HPA"/>
</dbReference>
<dbReference type="GO" id="GO:0005829">
    <property type="term" value="C:cytosol"/>
    <property type="evidence" value="ECO:0000304"/>
    <property type="project" value="Reactome"/>
</dbReference>
<dbReference type="GO" id="GO:0043240">
    <property type="term" value="C:Fanconi anaemia nuclear complex"/>
    <property type="evidence" value="ECO:0000314"/>
    <property type="project" value="UniProtKB"/>
</dbReference>
<dbReference type="GO" id="GO:0005654">
    <property type="term" value="C:nucleoplasm"/>
    <property type="evidence" value="ECO:0000314"/>
    <property type="project" value="HPA"/>
</dbReference>
<dbReference type="GO" id="GO:0005634">
    <property type="term" value="C:nucleus"/>
    <property type="evidence" value="ECO:0000303"/>
    <property type="project" value="UniProtKB"/>
</dbReference>
<dbReference type="GO" id="GO:0010467">
    <property type="term" value="P:gene expression"/>
    <property type="evidence" value="ECO:0007669"/>
    <property type="project" value="Ensembl"/>
</dbReference>
<dbReference type="GO" id="GO:0048872">
    <property type="term" value="P:homeostasis of number of cells"/>
    <property type="evidence" value="ECO:0007669"/>
    <property type="project" value="Ensembl"/>
</dbReference>
<dbReference type="GO" id="GO:0036297">
    <property type="term" value="P:interstrand cross-link repair"/>
    <property type="evidence" value="ECO:0000303"/>
    <property type="project" value="ComplexPortal"/>
</dbReference>
<dbReference type="GO" id="GO:0001541">
    <property type="term" value="P:ovarian follicle development"/>
    <property type="evidence" value="ECO:0007669"/>
    <property type="project" value="Ensembl"/>
</dbReference>
<dbReference type="CDD" id="cd07439">
    <property type="entry name" value="FANCE_c-term"/>
    <property type="match status" value="1"/>
</dbReference>
<dbReference type="FunFam" id="1.25.40.480:FF:000002">
    <property type="entry name" value="Fanconi anemia, complementation group E"/>
    <property type="match status" value="1"/>
</dbReference>
<dbReference type="Gene3D" id="1.25.40.480">
    <property type="match status" value="1"/>
</dbReference>
<dbReference type="InterPro" id="IPR039685">
    <property type="entry name" value="FANCE"/>
</dbReference>
<dbReference type="InterPro" id="IPR021025">
    <property type="entry name" value="Fanconi_anaemia_gr_E_prot_C"/>
</dbReference>
<dbReference type="PANTHER" id="PTHR32094">
    <property type="entry name" value="FANCONI ANEMIA GROUP E PROTEIN"/>
    <property type="match status" value="1"/>
</dbReference>
<dbReference type="PANTHER" id="PTHR32094:SF5">
    <property type="entry name" value="FANCONI ANEMIA GROUP E PROTEIN"/>
    <property type="match status" value="1"/>
</dbReference>
<dbReference type="Pfam" id="PF11510">
    <property type="entry name" value="FA_FANCE"/>
    <property type="match status" value="1"/>
</dbReference>
<name>FANCE_HUMAN</name>
<proteinExistence type="evidence at protein level"/>
<reference key="1">
    <citation type="journal article" date="2000" name="Am. J. Hum. Genet.">
        <title>Isolation of a cDNA representing the Fanconi anemia complementation group E gene.</title>
        <authorList>
            <person name="de Winter J.P."/>
            <person name="Leveille F."/>
            <person name="van Berkel C.G.M."/>
            <person name="Rooimans M.A."/>
            <person name="van der Weel L."/>
            <person name="Steltenpool J."/>
            <person name="Demuth I."/>
            <person name="Morgan N.V."/>
            <person name="Alon N."/>
            <person name="Bosnoyan-Collins L."/>
            <person name="Lightfoot J."/>
            <person name="Leegwater P.A."/>
            <person name="Waisfisz Q."/>
            <person name="Komatsu K."/>
            <person name="Arwert F."/>
            <person name="Pronk J.C."/>
            <person name="Mathew C.G."/>
            <person name="Digweed M."/>
            <person name="Buchwald M."/>
            <person name="Joenje H."/>
        </authorList>
    </citation>
    <scope>NUCLEOTIDE SEQUENCE [MRNA]</scope>
    <scope>INVOLVEMENT IN FANCE</scope>
</reference>
<reference key="2">
    <citation type="submission" date="2005-04" db="EMBL/GenBank/DDBJ databases">
        <authorList>
            <consortium name="NIEHS SNPs program"/>
        </authorList>
    </citation>
    <scope>NUCLEOTIDE SEQUENCE [GENOMIC DNA]</scope>
    <scope>VARIANTS LEU-89; LEU-204; ARG-340; GLN-343 AND THR-502</scope>
</reference>
<reference key="3">
    <citation type="journal article" date="2004" name="Nat. Genet.">
        <title>Complete sequencing and characterization of 21,243 full-length human cDNAs.</title>
        <authorList>
            <person name="Ota T."/>
            <person name="Suzuki Y."/>
            <person name="Nishikawa T."/>
            <person name="Otsuki T."/>
            <person name="Sugiyama T."/>
            <person name="Irie R."/>
            <person name="Wakamatsu A."/>
            <person name="Hayashi K."/>
            <person name="Sato H."/>
            <person name="Nagai K."/>
            <person name="Kimura K."/>
            <person name="Makita H."/>
            <person name="Sekine M."/>
            <person name="Obayashi M."/>
            <person name="Nishi T."/>
            <person name="Shibahara T."/>
            <person name="Tanaka T."/>
            <person name="Ishii S."/>
            <person name="Yamamoto J."/>
            <person name="Saito K."/>
            <person name="Kawai Y."/>
            <person name="Isono Y."/>
            <person name="Nakamura Y."/>
            <person name="Nagahari K."/>
            <person name="Murakami K."/>
            <person name="Yasuda T."/>
            <person name="Iwayanagi T."/>
            <person name="Wagatsuma M."/>
            <person name="Shiratori A."/>
            <person name="Sudo H."/>
            <person name="Hosoiri T."/>
            <person name="Kaku Y."/>
            <person name="Kodaira H."/>
            <person name="Kondo H."/>
            <person name="Sugawara M."/>
            <person name="Takahashi M."/>
            <person name="Kanda K."/>
            <person name="Yokoi T."/>
            <person name="Furuya T."/>
            <person name="Kikkawa E."/>
            <person name="Omura Y."/>
            <person name="Abe K."/>
            <person name="Kamihara K."/>
            <person name="Katsuta N."/>
            <person name="Sato K."/>
            <person name="Tanikawa M."/>
            <person name="Yamazaki M."/>
            <person name="Ninomiya K."/>
            <person name="Ishibashi T."/>
            <person name="Yamashita H."/>
            <person name="Murakawa K."/>
            <person name="Fujimori K."/>
            <person name="Tanai H."/>
            <person name="Kimata M."/>
            <person name="Watanabe M."/>
            <person name="Hiraoka S."/>
            <person name="Chiba Y."/>
            <person name="Ishida S."/>
            <person name="Ono Y."/>
            <person name="Takiguchi S."/>
            <person name="Watanabe S."/>
            <person name="Yosida M."/>
            <person name="Hotuta T."/>
            <person name="Kusano J."/>
            <person name="Kanehori K."/>
            <person name="Takahashi-Fujii A."/>
            <person name="Hara H."/>
            <person name="Tanase T.-O."/>
            <person name="Nomura Y."/>
            <person name="Togiya S."/>
            <person name="Komai F."/>
            <person name="Hara R."/>
            <person name="Takeuchi K."/>
            <person name="Arita M."/>
            <person name="Imose N."/>
            <person name="Musashino K."/>
            <person name="Yuuki H."/>
            <person name="Oshima A."/>
            <person name="Sasaki N."/>
            <person name="Aotsuka S."/>
            <person name="Yoshikawa Y."/>
            <person name="Matsunawa H."/>
            <person name="Ichihara T."/>
            <person name="Shiohata N."/>
            <person name="Sano S."/>
            <person name="Moriya S."/>
            <person name="Momiyama H."/>
            <person name="Satoh N."/>
            <person name="Takami S."/>
            <person name="Terashima Y."/>
            <person name="Suzuki O."/>
            <person name="Nakagawa S."/>
            <person name="Senoh A."/>
            <person name="Mizoguchi H."/>
            <person name="Goto Y."/>
            <person name="Shimizu F."/>
            <person name="Wakebe H."/>
            <person name="Hishigaki H."/>
            <person name="Watanabe T."/>
            <person name="Sugiyama A."/>
            <person name="Takemoto M."/>
            <person name="Kawakami B."/>
            <person name="Yamazaki M."/>
            <person name="Watanabe K."/>
            <person name="Kumagai A."/>
            <person name="Itakura S."/>
            <person name="Fukuzumi Y."/>
            <person name="Fujimori Y."/>
            <person name="Komiyama M."/>
            <person name="Tashiro H."/>
            <person name="Tanigami A."/>
            <person name="Fujiwara T."/>
            <person name="Ono T."/>
            <person name="Yamada K."/>
            <person name="Fujii Y."/>
            <person name="Ozaki K."/>
            <person name="Hirao M."/>
            <person name="Ohmori Y."/>
            <person name="Kawabata A."/>
            <person name="Hikiji T."/>
            <person name="Kobatake N."/>
            <person name="Inagaki H."/>
            <person name="Ikema Y."/>
            <person name="Okamoto S."/>
            <person name="Okitani R."/>
            <person name="Kawakami T."/>
            <person name="Noguchi S."/>
            <person name="Itoh T."/>
            <person name="Shigeta K."/>
            <person name="Senba T."/>
            <person name="Matsumura K."/>
            <person name="Nakajima Y."/>
            <person name="Mizuno T."/>
            <person name="Morinaga M."/>
            <person name="Sasaki M."/>
            <person name="Togashi T."/>
            <person name="Oyama M."/>
            <person name="Hata H."/>
            <person name="Watanabe M."/>
            <person name="Komatsu T."/>
            <person name="Mizushima-Sugano J."/>
            <person name="Satoh T."/>
            <person name="Shirai Y."/>
            <person name="Takahashi Y."/>
            <person name="Nakagawa K."/>
            <person name="Okumura K."/>
            <person name="Nagase T."/>
            <person name="Nomura N."/>
            <person name="Kikuchi H."/>
            <person name="Masuho Y."/>
            <person name="Yamashita R."/>
            <person name="Nakai K."/>
            <person name="Yada T."/>
            <person name="Nakamura Y."/>
            <person name="Ohara O."/>
            <person name="Isogai T."/>
            <person name="Sugano S."/>
        </authorList>
    </citation>
    <scope>NUCLEOTIDE SEQUENCE [LARGE SCALE MRNA]</scope>
    <source>
        <tissue>Testis</tissue>
    </source>
</reference>
<reference key="4">
    <citation type="journal article" date="2003" name="Nature">
        <title>The DNA sequence and analysis of human chromosome 6.</title>
        <authorList>
            <person name="Mungall A.J."/>
            <person name="Palmer S.A."/>
            <person name="Sims S.K."/>
            <person name="Edwards C.A."/>
            <person name="Ashurst J.L."/>
            <person name="Wilming L."/>
            <person name="Jones M.C."/>
            <person name="Horton R."/>
            <person name="Hunt S.E."/>
            <person name="Scott C.E."/>
            <person name="Gilbert J.G.R."/>
            <person name="Clamp M.E."/>
            <person name="Bethel G."/>
            <person name="Milne S."/>
            <person name="Ainscough R."/>
            <person name="Almeida J.P."/>
            <person name="Ambrose K.D."/>
            <person name="Andrews T.D."/>
            <person name="Ashwell R.I.S."/>
            <person name="Babbage A.K."/>
            <person name="Bagguley C.L."/>
            <person name="Bailey J."/>
            <person name="Banerjee R."/>
            <person name="Barker D.J."/>
            <person name="Barlow K.F."/>
            <person name="Bates K."/>
            <person name="Beare D.M."/>
            <person name="Beasley H."/>
            <person name="Beasley O."/>
            <person name="Bird C.P."/>
            <person name="Blakey S.E."/>
            <person name="Bray-Allen S."/>
            <person name="Brook J."/>
            <person name="Brown A.J."/>
            <person name="Brown J.Y."/>
            <person name="Burford D.C."/>
            <person name="Burrill W."/>
            <person name="Burton J."/>
            <person name="Carder C."/>
            <person name="Carter N.P."/>
            <person name="Chapman J.C."/>
            <person name="Clark S.Y."/>
            <person name="Clark G."/>
            <person name="Clee C.M."/>
            <person name="Clegg S."/>
            <person name="Cobley V."/>
            <person name="Collier R.E."/>
            <person name="Collins J.E."/>
            <person name="Colman L.K."/>
            <person name="Corby N.R."/>
            <person name="Coville G.J."/>
            <person name="Culley K.M."/>
            <person name="Dhami P."/>
            <person name="Davies J."/>
            <person name="Dunn M."/>
            <person name="Earthrowl M.E."/>
            <person name="Ellington A.E."/>
            <person name="Evans K.A."/>
            <person name="Faulkner L."/>
            <person name="Francis M.D."/>
            <person name="Frankish A."/>
            <person name="Frankland J."/>
            <person name="French L."/>
            <person name="Garner P."/>
            <person name="Garnett J."/>
            <person name="Ghori M.J."/>
            <person name="Gilby L.M."/>
            <person name="Gillson C.J."/>
            <person name="Glithero R.J."/>
            <person name="Grafham D.V."/>
            <person name="Grant M."/>
            <person name="Gribble S."/>
            <person name="Griffiths C."/>
            <person name="Griffiths M.N.D."/>
            <person name="Hall R."/>
            <person name="Halls K.S."/>
            <person name="Hammond S."/>
            <person name="Harley J.L."/>
            <person name="Hart E.A."/>
            <person name="Heath P.D."/>
            <person name="Heathcott R."/>
            <person name="Holmes S.J."/>
            <person name="Howden P.J."/>
            <person name="Howe K.L."/>
            <person name="Howell G.R."/>
            <person name="Huckle E."/>
            <person name="Humphray S.J."/>
            <person name="Humphries M.D."/>
            <person name="Hunt A.R."/>
            <person name="Johnson C.M."/>
            <person name="Joy A.A."/>
            <person name="Kay M."/>
            <person name="Keenan S.J."/>
            <person name="Kimberley A.M."/>
            <person name="King A."/>
            <person name="Laird G.K."/>
            <person name="Langford C."/>
            <person name="Lawlor S."/>
            <person name="Leongamornlert D.A."/>
            <person name="Leversha M."/>
            <person name="Lloyd C.R."/>
            <person name="Lloyd D.M."/>
            <person name="Loveland J.E."/>
            <person name="Lovell J."/>
            <person name="Martin S."/>
            <person name="Mashreghi-Mohammadi M."/>
            <person name="Maslen G.L."/>
            <person name="Matthews L."/>
            <person name="McCann O.T."/>
            <person name="McLaren S.J."/>
            <person name="McLay K."/>
            <person name="McMurray A."/>
            <person name="Moore M.J.F."/>
            <person name="Mullikin J.C."/>
            <person name="Niblett D."/>
            <person name="Nickerson T."/>
            <person name="Novik K.L."/>
            <person name="Oliver K."/>
            <person name="Overton-Larty E.K."/>
            <person name="Parker A."/>
            <person name="Patel R."/>
            <person name="Pearce A.V."/>
            <person name="Peck A.I."/>
            <person name="Phillimore B.J.C.T."/>
            <person name="Phillips S."/>
            <person name="Plumb R.W."/>
            <person name="Porter K.M."/>
            <person name="Ramsey Y."/>
            <person name="Ranby S.A."/>
            <person name="Rice C.M."/>
            <person name="Ross M.T."/>
            <person name="Searle S.M."/>
            <person name="Sehra H.K."/>
            <person name="Sheridan E."/>
            <person name="Skuce C.D."/>
            <person name="Smith S."/>
            <person name="Smith M."/>
            <person name="Spraggon L."/>
            <person name="Squares S.L."/>
            <person name="Steward C.A."/>
            <person name="Sycamore N."/>
            <person name="Tamlyn-Hall G."/>
            <person name="Tester J."/>
            <person name="Theaker A.J."/>
            <person name="Thomas D.W."/>
            <person name="Thorpe A."/>
            <person name="Tracey A."/>
            <person name="Tromans A."/>
            <person name="Tubby B."/>
            <person name="Wall M."/>
            <person name="Wallis J.M."/>
            <person name="West A.P."/>
            <person name="White S.S."/>
            <person name="Whitehead S.L."/>
            <person name="Whittaker H."/>
            <person name="Wild A."/>
            <person name="Willey D.J."/>
            <person name="Wilmer T.E."/>
            <person name="Wood J.M."/>
            <person name="Wray P.W."/>
            <person name="Wyatt J.C."/>
            <person name="Young L."/>
            <person name="Younger R.M."/>
            <person name="Bentley D.R."/>
            <person name="Coulson A."/>
            <person name="Durbin R.M."/>
            <person name="Hubbard T."/>
            <person name="Sulston J.E."/>
            <person name="Dunham I."/>
            <person name="Rogers J."/>
            <person name="Beck S."/>
        </authorList>
    </citation>
    <scope>NUCLEOTIDE SEQUENCE [LARGE SCALE GENOMIC DNA]</scope>
</reference>
<reference key="5">
    <citation type="submission" date="2005-07" db="EMBL/GenBank/DDBJ databases">
        <authorList>
            <person name="Mural R.J."/>
            <person name="Istrail S."/>
            <person name="Sutton G.G."/>
            <person name="Florea L."/>
            <person name="Halpern A.L."/>
            <person name="Mobarry C.M."/>
            <person name="Lippert R."/>
            <person name="Walenz B."/>
            <person name="Shatkay H."/>
            <person name="Dew I."/>
            <person name="Miller J.R."/>
            <person name="Flanigan M.J."/>
            <person name="Edwards N.J."/>
            <person name="Bolanos R."/>
            <person name="Fasulo D."/>
            <person name="Halldorsson B.V."/>
            <person name="Hannenhalli S."/>
            <person name="Turner R."/>
            <person name="Yooseph S."/>
            <person name="Lu F."/>
            <person name="Nusskern D.R."/>
            <person name="Shue B.C."/>
            <person name="Zheng X.H."/>
            <person name="Zhong F."/>
            <person name="Delcher A.L."/>
            <person name="Huson D.H."/>
            <person name="Kravitz S.A."/>
            <person name="Mouchard L."/>
            <person name="Reinert K."/>
            <person name="Remington K.A."/>
            <person name="Clark A.G."/>
            <person name="Waterman M.S."/>
            <person name="Eichler E.E."/>
            <person name="Adams M.D."/>
            <person name="Hunkapiller M.W."/>
            <person name="Myers E.W."/>
            <person name="Venter J.C."/>
        </authorList>
    </citation>
    <scope>NUCLEOTIDE SEQUENCE [LARGE SCALE GENOMIC DNA]</scope>
</reference>
<reference key="6">
    <citation type="journal article" date="2004" name="Genome Res.">
        <title>The status, quality, and expansion of the NIH full-length cDNA project: the Mammalian Gene Collection (MGC).</title>
        <authorList>
            <consortium name="The MGC Project Team"/>
        </authorList>
    </citation>
    <scope>NUCLEOTIDE SEQUENCE [LARGE SCALE MRNA]</scope>
    <source>
        <tissue>Eye</tissue>
    </source>
</reference>
<reference key="7">
    <citation type="journal article" date="2002" name="EMBO J.">
        <title>FANCE: the link between Fanconi anaemia complex assembly and activity.</title>
        <authorList>
            <person name="Pace P."/>
            <person name="Johnson M."/>
            <person name="Tan W.M."/>
            <person name="Mosedale G."/>
            <person name="Sng C."/>
            <person name="Hoatlin M.E."/>
            <person name="de Winter J.P."/>
            <person name="Joenje H."/>
            <person name="Gergely F."/>
            <person name="Patel K.J."/>
        </authorList>
    </citation>
    <scope>FUNCTION</scope>
    <scope>SUBCELLULAR LOCATION</scope>
</reference>
<reference key="8">
    <citation type="journal article" date="2003" name="Blood">
        <title>Fanconi anemia protein complex: mapping protein interactions in the yeast 2- and 3-hybrid systems.</title>
        <authorList>
            <person name="Gordon S.M."/>
            <person name="Buchwald M."/>
        </authorList>
    </citation>
    <scope>INTERACTION WITH FANCC AND FANCD2</scope>
</reference>
<reference key="9">
    <citation type="journal article" date="2003" name="Mol. Cell. Biol.">
        <title>A multiprotein nuclear complex connects Fanconi anemia and Bloom syndrome.</title>
        <authorList>
            <person name="Meetei A.R."/>
            <person name="Sechi S."/>
            <person name="Wallisch M."/>
            <person name="Yang D."/>
            <person name="Young M.K."/>
            <person name="Joenje H."/>
            <person name="Hoatlin M.E."/>
            <person name="Wang W."/>
        </authorList>
    </citation>
    <scope>IDENTIFICATION IN A COMPLEX WITH FANCA; FANCC; FANCF; FANCG AND FANCL</scope>
</reference>
<reference key="10">
    <citation type="journal article" date="2004" name="Nat. Genet.">
        <title>X-linked inheritance of Fanconi anemia complementation group B.</title>
        <authorList>
            <person name="Meetei A.R."/>
            <person name="Levitus M."/>
            <person name="Xue Y."/>
            <person name="Medhurst A.L."/>
            <person name="Zwaan M."/>
            <person name="Ling C."/>
            <person name="Rooimans M.A."/>
            <person name="Bier P."/>
            <person name="Hoatlin M."/>
            <person name="Pals G."/>
            <person name="de Winter J.P."/>
            <person name="Wang W."/>
            <person name="Joenje H."/>
        </authorList>
    </citation>
    <scope>IDENTIFICATION IN A COMPLEX WITH FANCA; FANCB; FANCC; FANCF; FANCG AND FANCL</scope>
</reference>
<reference key="11">
    <citation type="journal article" date="2005" name="Nat. Genet.">
        <title>A human ortholog of archaeal DNA repair protein Hef is defective in Fanconi anemia complementation group M.</title>
        <authorList>
            <person name="Meetei A.R."/>
            <person name="Medhurst A.L."/>
            <person name="Ling C."/>
            <person name="Xue Y."/>
            <person name="Singh T.R."/>
            <person name="Bier P."/>
            <person name="Steltenpool J."/>
            <person name="Stone S."/>
            <person name="Dokal I."/>
            <person name="Mathew C.G."/>
            <person name="Hoatlin M."/>
            <person name="Joenje H."/>
            <person name="de Winter J.P."/>
            <person name="Wang W."/>
        </authorList>
    </citation>
    <scope>IDENTIFICATION IN A COMPLEX WITH FANCA; FANCB; FANCC; FANCF; FANCG; FANCL AND FANCM</scope>
</reference>
<reference key="12">
    <citation type="journal article" date="2007" name="Mol. Cell. Biol.">
        <title>Chk1-mediated phosphorylation of FANCE is required for the Fanconi anemia/BRCA pathway.</title>
        <authorList>
            <person name="Wang X."/>
            <person name="Kennedy R.D."/>
            <person name="Ray K."/>
            <person name="Stuckert P."/>
            <person name="Ellenberger T."/>
            <person name="D'Andrea A.D."/>
        </authorList>
    </citation>
    <scope>FUNCTION IN DNA REPAIR</scope>
    <scope>SUBCELLULAR LOCATION</scope>
    <scope>PHOSPHORYLATION AT THR-346 AND SER-374</scope>
    <scope>MUTAGENESIS OF THR-346 AND SER-374</scope>
    <scope>UBIQUITINATION</scope>
</reference>
<reference key="13">
    <citation type="journal article" date="2008" name="Proc. Natl. Acad. Sci. U.S.A.">
        <title>A quantitative atlas of mitotic phosphorylation.</title>
        <authorList>
            <person name="Dephoure N."/>
            <person name="Zhou C."/>
            <person name="Villen J."/>
            <person name="Beausoleil S.A."/>
            <person name="Bakalarski C.E."/>
            <person name="Elledge S.J."/>
            <person name="Gygi S.P."/>
        </authorList>
    </citation>
    <scope>PHOSPHORYLATION [LARGE SCALE ANALYSIS] AT SER-249</scope>
    <scope>IDENTIFICATION BY MASS SPECTROMETRY [LARGE SCALE ANALYSIS]</scope>
    <source>
        <tissue>Cervix carcinoma</tissue>
    </source>
</reference>
<reference key="14">
    <citation type="journal article" date="2009" name="Sci. Signal.">
        <title>Quantitative phosphoproteomic analysis of T cell receptor signaling reveals system-wide modulation of protein-protein interactions.</title>
        <authorList>
            <person name="Mayya V."/>
            <person name="Lundgren D.H."/>
            <person name="Hwang S.-I."/>
            <person name="Rezaul K."/>
            <person name="Wu L."/>
            <person name="Eng J.K."/>
            <person name="Rodionov V."/>
            <person name="Han D.K."/>
        </authorList>
    </citation>
    <scope>PHOSPHORYLATION [LARGE SCALE ANALYSIS] AT SER-249</scope>
    <scope>IDENTIFICATION BY MASS SPECTROMETRY [LARGE SCALE ANALYSIS]</scope>
    <source>
        <tissue>Leukemic T-cell</tissue>
    </source>
</reference>
<reference key="15">
    <citation type="journal article" date="2011" name="Sci. Signal.">
        <title>System-wide temporal characterization of the proteome and phosphoproteome of human embryonic stem cell differentiation.</title>
        <authorList>
            <person name="Rigbolt K.T."/>
            <person name="Prokhorova T.A."/>
            <person name="Akimov V."/>
            <person name="Henningsen J."/>
            <person name="Johansen P.T."/>
            <person name="Kratchmarova I."/>
            <person name="Kassem M."/>
            <person name="Mann M."/>
            <person name="Olsen J.V."/>
            <person name="Blagoev B."/>
        </authorList>
    </citation>
    <scope>PHOSPHORYLATION [LARGE SCALE ANALYSIS] AT SER-249</scope>
    <scope>IDENTIFICATION BY MASS SPECTROMETRY [LARGE SCALE ANALYSIS]</scope>
</reference>
<reference key="16">
    <citation type="journal article" date="2012" name="Nat. Struct. Mol. Biol.">
        <title>Regulation of Rev1 by the Fanconi anemia core complex.</title>
        <authorList>
            <person name="Kim H."/>
            <person name="Yang K."/>
            <person name="Dejsuphong D."/>
            <person name="D'Andrea A.D."/>
        </authorList>
    </citation>
    <scope>IDENTIFICATION IN THE FA COMPLEX</scope>
</reference>
<reference key="17">
    <citation type="journal article" date="2013" name="J. Proteome Res.">
        <title>Toward a comprehensive characterization of a human cancer cell phosphoproteome.</title>
        <authorList>
            <person name="Zhou H."/>
            <person name="Di Palma S."/>
            <person name="Preisinger C."/>
            <person name="Peng M."/>
            <person name="Polat A.N."/>
            <person name="Heck A.J."/>
            <person name="Mohammed S."/>
        </authorList>
    </citation>
    <scope>PHOSPHORYLATION [LARGE SCALE ANALYSIS] AT SER-249</scope>
    <scope>IDENTIFICATION BY MASS SPECTROMETRY [LARGE SCALE ANALYSIS]</scope>
    <source>
        <tissue>Cervix carcinoma</tissue>
        <tissue>Erythroleukemia</tissue>
    </source>
</reference>
<reference key="18">
    <citation type="journal article" date="2008" name="Hum. Mutat.">
        <title>Genetic subtyping of Fanconi anemia by comprehensive mutation screening.</title>
        <authorList>
            <person name="Ameziane N."/>
            <person name="Errami A."/>
            <person name="Leveille F."/>
            <person name="Fontaine C."/>
            <person name="de Vries Y."/>
            <person name="van Spaendonk R.M."/>
            <person name="de Winter J.P."/>
            <person name="Pals G."/>
            <person name="Joenje H."/>
        </authorList>
    </citation>
    <scope>VARIANT FANCE GLN-184</scope>
</reference>
<keyword id="KW-0002">3D-structure</keyword>
<keyword id="KW-0225">Disease variant</keyword>
<keyword id="KW-0227">DNA damage</keyword>
<keyword id="KW-0234">DNA repair</keyword>
<keyword id="KW-0923">Fanconi anemia</keyword>
<keyword id="KW-0539">Nucleus</keyword>
<keyword id="KW-0597">Phosphoprotein</keyword>
<keyword id="KW-1267">Proteomics identification</keyword>
<keyword id="KW-1185">Reference proteome</keyword>
<keyword id="KW-0832">Ubl conjugation</keyword>
<accession>Q9HB96</accession>
<accession>A8K907</accession>
<accession>Q4ZGH2</accession>
<comment type="function">
    <text evidence="3 8">As part of the Fanconi anemia (FA) complex functions in DNA cross-links repair. Required for the nuclear accumulation of FANCC and provides a critical bridge between the FA complex and FANCD2.</text>
</comment>
<comment type="subunit">
    <text evidence="4 5 6 7 10">Belongs to the multisubunit FA complex composed of FANCA, FANCB, FANCC, FANCE, FANCF, FANCG, FANCL/PHF9 and FANCM. The complex is not found in FA patients. Interacts with FANCC and FANCD2.</text>
</comment>
<comment type="interaction">
    <interactant intactId="EBI-396803">
        <id>Q9HB96</id>
    </interactant>
    <interactant intactId="EBI-81625">
        <id>Q00597</id>
        <label>FANCC</label>
    </interactant>
    <organismsDiffer>false</organismsDiffer>
    <experiments>3</experiments>
</comment>
<comment type="subcellular location">
    <subcellularLocation>
        <location evidence="3 8">Nucleus</location>
    </subcellularLocation>
</comment>
<comment type="PTM">
    <text evidence="8">Phosphorylated. Phosphorylation by CHEK1 at Thr-346 and Ser-374 regulates its function in DNA cross-links repair.</text>
</comment>
<comment type="PTM">
    <text evidence="8">Ubiquitinated. Phosphorylation by CHEK1 induces polyubiquitination and degradation.</text>
</comment>
<comment type="disease" evidence="2 9">
    <disease id="DI-03117">
        <name>Fanconi anemia complementation group E</name>
        <acronym>FANCE</acronym>
        <description>A disorder affecting all bone marrow elements and resulting in anemia, leukopenia and thrombopenia. It is associated with cardiac, renal and limb malformations, dermal pigmentary changes, and a predisposition to the development of malignancies. At the cellular level it is associated with hypersensitivity to DNA-damaging agents, chromosomal instability (increased chromosome breakage) and defective DNA repair.</description>
        <dbReference type="MIM" id="600901"/>
    </disease>
    <text>The disease is caused by variants affecting the gene represented in this entry.</text>
</comment>
<comment type="online information" name="Atlas of Genetics and Cytogenetics in Oncology and Haematology">
    <link uri="https://atlasgeneticsoncology.org/gene/293/FANCE"/>
</comment>
<comment type="online information" name="Fanconi Anemia Mutation Database">
    <link uri="https://www2.rockefeller.edu/fanconi/genes/jumpe"/>
</comment>
<organism>
    <name type="scientific">Homo sapiens</name>
    <name type="common">Human</name>
    <dbReference type="NCBI Taxonomy" id="9606"/>
    <lineage>
        <taxon>Eukaryota</taxon>
        <taxon>Metazoa</taxon>
        <taxon>Chordata</taxon>
        <taxon>Craniata</taxon>
        <taxon>Vertebrata</taxon>
        <taxon>Euteleostomi</taxon>
        <taxon>Mammalia</taxon>
        <taxon>Eutheria</taxon>
        <taxon>Euarchontoglires</taxon>
        <taxon>Primates</taxon>
        <taxon>Haplorrhini</taxon>
        <taxon>Catarrhini</taxon>
        <taxon>Hominidae</taxon>
        <taxon>Homo</taxon>
    </lineage>
</organism>
<feature type="chain" id="PRO_0000087187" description="Fanconi anemia group E protein">
    <location>
        <begin position="1"/>
        <end position="536"/>
    </location>
</feature>
<feature type="region of interest" description="Interaction with FANCC" evidence="4">
    <location>
        <begin position="150"/>
        <end position="371"/>
    </location>
</feature>
<feature type="region of interest" description="Disordered" evidence="1">
    <location>
        <begin position="171"/>
        <end position="252"/>
    </location>
</feature>
<feature type="compositionally biased region" description="Basic and acidic residues" evidence="1">
    <location>
        <begin position="230"/>
        <end position="239"/>
    </location>
</feature>
<feature type="modified residue" description="Phosphoserine" evidence="12 13 14 15">
    <location>
        <position position="249"/>
    </location>
</feature>
<feature type="modified residue" description="Phosphothreonine; by CHEK1" evidence="8">
    <location>
        <position position="346"/>
    </location>
</feature>
<feature type="modified residue" description="Phosphoserine; by CHEK1" evidence="8">
    <location>
        <position position="374"/>
    </location>
</feature>
<feature type="sequence variant" id="VAR_023372" description="In dbSNP:rs45600543." evidence="11">
    <original>R</original>
    <variation>L</variation>
    <location>
        <position position="89"/>
    </location>
</feature>
<feature type="sequence variant" id="VAR_038022" description="In FANCE; uncertain significance; dbSNP:rs373268808." evidence="9">
    <original>P</original>
    <variation>Q</variation>
    <location>
        <position position="184"/>
    </location>
</feature>
<feature type="sequence variant" id="VAR_023373" description="In dbSNP:rs7761870." evidence="11">
    <original>S</original>
    <variation>L</variation>
    <location>
        <position position="204"/>
    </location>
</feature>
<feature type="sequence variant" id="VAR_023374" description="In dbSNP:rs45524646." evidence="11">
    <original>G</original>
    <variation>R</variation>
    <location>
        <position position="340"/>
    </location>
</feature>
<feature type="sequence variant" id="VAR_023375" description="In dbSNP:rs45467798." evidence="11">
    <original>R</original>
    <variation>Q</variation>
    <location>
        <position position="343"/>
    </location>
</feature>
<feature type="sequence variant" id="VAR_023376" description="In dbSNP:rs9462088." evidence="11">
    <original>A</original>
    <variation>T</variation>
    <location>
        <position position="502"/>
    </location>
</feature>
<feature type="mutagenesis site" description="Non-phosphorylatable by CHEK1, not polyubiquitinated and unable to complement the mitomycin C hypersensitivity of cells lacking FANCE; when associated with A-374." evidence="8">
    <original>T</original>
    <variation>A</variation>
    <location>
        <position position="346"/>
    </location>
</feature>
<feature type="mutagenesis site" description="Non-phosphorylatable by CHEK1, not polyubiquitinated and unable to complement the mitomycin C hypersensitivity of cells lacking FANCE; when associated with A-346." evidence="8">
    <original>S</original>
    <variation>A</variation>
    <location>
        <position position="374"/>
    </location>
</feature>
<feature type="helix" evidence="16">
    <location>
        <begin position="282"/>
        <end position="299"/>
    </location>
</feature>
<feature type="helix" evidence="16">
    <location>
        <begin position="311"/>
        <end position="314"/>
    </location>
</feature>
<feature type="helix" evidence="16">
    <location>
        <begin position="315"/>
        <end position="318"/>
    </location>
</feature>
<feature type="helix" evidence="16">
    <location>
        <begin position="321"/>
        <end position="331"/>
    </location>
</feature>
<feature type="helix" evidence="16">
    <location>
        <begin position="333"/>
        <end position="335"/>
    </location>
</feature>
<feature type="helix" evidence="16">
    <location>
        <begin position="338"/>
        <end position="350"/>
    </location>
</feature>
<feature type="helix" evidence="16">
    <location>
        <begin position="357"/>
        <end position="374"/>
    </location>
</feature>
<feature type="helix" evidence="16">
    <location>
        <begin position="381"/>
        <end position="393"/>
    </location>
</feature>
<feature type="helix" evidence="16">
    <location>
        <begin position="395"/>
        <end position="408"/>
    </location>
</feature>
<feature type="helix" evidence="16">
    <location>
        <begin position="414"/>
        <end position="425"/>
    </location>
</feature>
<feature type="helix" evidence="16">
    <location>
        <begin position="431"/>
        <end position="443"/>
    </location>
</feature>
<feature type="helix" evidence="16">
    <location>
        <begin position="448"/>
        <end position="458"/>
    </location>
</feature>
<feature type="helix" evidence="16">
    <location>
        <begin position="466"/>
        <end position="477"/>
    </location>
</feature>
<feature type="helix" evidence="16">
    <location>
        <begin position="487"/>
        <end position="499"/>
    </location>
</feature>
<feature type="helix" evidence="16">
    <location>
        <begin position="501"/>
        <end position="503"/>
    </location>
</feature>
<feature type="helix" evidence="16">
    <location>
        <begin position="506"/>
        <end position="516"/>
    </location>
</feature>
<feature type="strand" evidence="16">
    <location>
        <begin position="518"/>
        <end position="523"/>
    </location>
</feature>
<feature type="helix" evidence="16">
    <location>
        <begin position="524"/>
        <end position="534"/>
    </location>
</feature>
<protein>
    <recommendedName>
        <fullName>Fanconi anemia group E protein</fullName>
        <shortName>Protein FACE</shortName>
    </recommendedName>
</protein>
<evidence type="ECO:0000256" key="1">
    <source>
        <dbReference type="SAM" id="MobiDB-lite"/>
    </source>
</evidence>
<evidence type="ECO:0000269" key="2">
    <source>
    </source>
</evidence>
<evidence type="ECO:0000269" key="3">
    <source>
    </source>
</evidence>
<evidence type="ECO:0000269" key="4">
    <source>
    </source>
</evidence>
<evidence type="ECO:0000269" key="5">
    <source>
    </source>
</evidence>
<evidence type="ECO:0000269" key="6">
    <source>
    </source>
</evidence>
<evidence type="ECO:0000269" key="7">
    <source>
    </source>
</evidence>
<evidence type="ECO:0000269" key="8">
    <source>
    </source>
</evidence>
<evidence type="ECO:0000269" key="9">
    <source>
    </source>
</evidence>
<evidence type="ECO:0000269" key="10">
    <source>
    </source>
</evidence>
<evidence type="ECO:0000269" key="11">
    <source ref="2"/>
</evidence>
<evidence type="ECO:0007744" key="12">
    <source>
    </source>
</evidence>
<evidence type="ECO:0007744" key="13">
    <source>
    </source>
</evidence>
<evidence type="ECO:0007744" key="14">
    <source>
    </source>
</evidence>
<evidence type="ECO:0007744" key="15">
    <source>
    </source>
</evidence>
<evidence type="ECO:0007829" key="16">
    <source>
        <dbReference type="PDB" id="2ILR"/>
    </source>
</evidence>